<gene>
    <name evidence="1" type="primary">fusA</name>
    <name type="ordered locus">Acid345_1223</name>
</gene>
<name>EFG_KORVE</name>
<sequence>MARQVPLERCRNIGIMAHIDAGKTTTTERVLFYTGRTHRIGEVHEGTATMDWMAQEQERGITITSAATTCTWRDERINIIDTPGHVDFTAEVERSLRVLDGAVAVFDAVHGVEPQSETVWRQADKYSVPRICFINKIDKMGADFEHAIDTIRKRLNAKPVAIQYPIGLEDKFKGVIDLFKMKALVWHDEAMGSQYDVEEIPAELLKKAQAFHNLMVETIAECDDELMAKYIEGEEMTAAELQAGLRRATIAMKVFPVTVGTAFKNKGVQTLLDAVVDYLPSPLDIPPVTGKNPDTGLEEQRSADDKQPFAALAFKIMTDPFVGQLTFIRVYSGQLKTGDSVYNSSKGRTERIGRLLKMHANKREEIGEIMAGDICAVVGLKTITTGDTISDEKHPLVLESIEFPTPVISVAVEPKTKSDQEKMGVALNKLAQEDPTFRVSTDPDSGQTIIAGMGELHLEILVDRMMREFHVQANVGKPQVAYRETIRKEAQAEGKYIRQTGGSGQYGHCKIRVGPNEPGKGYEFINDIVGGTIPKEFIKPIDQGIKEALEGGVLAGYEMVDVKVTLYDGSYHDVDSNEMAFKIAGSMAFKEAARKASPVLLEPVMSVEVVVPEEYMGVIIGDLNSRRGRIEGLEHRAGSQVVKAMVPLAEMFGYVNSMRSNTQGRATFSMHFAHYEEAPRSVAEEIVAKVQGKPAAR</sequence>
<dbReference type="EMBL" id="CP000360">
    <property type="protein sequence ID" value="ABF40225.1"/>
    <property type="molecule type" value="Genomic_DNA"/>
</dbReference>
<dbReference type="RefSeq" id="WP_011522027.1">
    <property type="nucleotide sequence ID" value="NC_008009.1"/>
</dbReference>
<dbReference type="SMR" id="Q1ISC5"/>
<dbReference type="STRING" id="204669.Acid345_1223"/>
<dbReference type="EnsemblBacteria" id="ABF40225">
    <property type="protein sequence ID" value="ABF40225"/>
    <property type="gene ID" value="Acid345_1223"/>
</dbReference>
<dbReference type="KEGG" id="aba:Acid345_1223"/>
<dbReference type="eggNOG" id="COG0480">
    <property type="taxonomic scope" value="Bacteria"/>
</dbReference>
<dbReference type="HOGENOM" id="CLU_002794_4_1_0"/>
<dbReference type="OrthoDB" id="9804431at2"/>
<dbReference type="Proteomes" id="UP000002432">
    <property type="component" value="Chromosome"/>
</dbReference>
<dbReference type="GO" id="GO:0005737">
    <property type="term" value="C:cytoplasm"/>
    <property type="evidence" value="ECO:0007669"/>
    <property type="project" value="UniProtKB-SubCell"/>
</dbReference>
<dbReference type="GO" id="GO:0005525">
    <property type="term" value="F:GTP binding"/>
    <property type="evidence" value="ECO:0007669"/>
    <property type="project" value="UniProtKB-UniRule"/>
</dbReference>
<dbReference type="GO" id="GO:0003924">
    <property type="term" value="F:GTPase activity"/>
    <property type="evidence" value="ECO:0007669"/>
    <property type="project" value="InterPro"/>
</dbReference>
<dbReference type="GO" id="GO:0003746">
    <property type="term" value="F:translation elongation factor activity"/>
    <property type="evidence" value="ECO:0007669"/>
    <property type="project" value="UniProtKB-UniRule"/>
</dbReference>
<dbReference type="GO" id="GO:0032790">
    <property type="term" value="P:ribosome disassembly"/>
    <property type="evidence" value="ECO:0007669"/>
    <property type="project" value="TreeGrafter"/>
</dbReference>
<dbReference type="CDD" id="cd01886">
    <property type="entry name" value="EF-G"/>
    <property type="match status" value="1"/>
</dbReference>
<dbReference type="CDD" id="cd16262">
    <property type="entry name" value="EFG_III"/>
    <property type="match status" value="1"/>
</dbReference>
<dbReference type="CDD" id="cd01434">
    <property type="entry name" value="EFG_mtEFG1_IV"/>
    <property type="match status" value="1"/>
</dbReference>
<dbReference type="CDD" id="cd03713">
    <property type="entry name" value="EFG_mtEFG_C"/>
    <property type="match status" value="1"/>
</dbReference>
<dbReference type="CDD" id="cd04088">
    <property type="entry name" value="EFG_mtEFG_II"/>
    <property type="match status" value="1"/>
</dbReference>
<dbReference type="FunFam" id="2.40.30.10:FF:000006">
    <property type="entry name" value="Elongation factor G"/>
    <property type="match status" value="1"/>
</dbReference>
<dbReference type="FunFam" id="3.30.230.10:FF:000003">
    <property type="entry name" value="Elongation factor G"/>
    <property type="match status" value="1"/>
</dbReference>
<dbReference type="FunFam" id="3.30.70.240:FF:000001">
    <property type="entry name" value="Elongation factor G"/>
    <property type="match status" value="1"/>
</dbReference>
<dbReference type="FunFam" id="3.30.70.870:FF:000001">
    <property type="entry name" value="Elongation factor G"/>
    <property type="match status" value="1"/>
</dbReference>
<dbReference type="FunFam" id="3.40.50.300:FF:000029">
    <property type="entry name" value="Elongation factor G"/>
    <property type="match status" value="1"/>
</dbReference>
<dbReference type="Gene3D" id="3.30.230.10">
    <property type="match status" value="1"/>
</dbReference>
<dbReference type="Gene3D" id="3.30.70.240">
    <property type="match status" value="1"/>
</dbReference>
<dbReference type="Gene3D" id="3.30.70.870">
    <property type="entry name" value="Elongation Factor G (Translational Gtpase), domain 3"/>
    <property type="match status" value="1"/>
</dbReference>
<dbReference type="Gene3D" id="3.40.50.300">
    <property type="entry name" value="P-loop containing nucleotide triphosphate hydrolases"/>
    <property type="match status" value="1"/>
</dbReference>
<dbReference type="Gene3D" id="2.40.30.10">
    <property type="entry name" value="Translation factors"/>
    <property type="match status" value="1"/>
</dbReference>
<dbReference type="HAMAP" id="MF_00054_B">
    <property type="entry name" value="EF_G_EF_2_B"/>
    <property type="match status" value="1"/>
</dbReference>
<dbReference type="InterPro" id="IPR041095">
    <property type="entry name" value="EFG_II"/>
</dbReference>
<dbReference type="InterPro" id="IPR009022">
    <property type="entry name" value="EFG_III"/>
</dbReference>
<dbReference type="InterPro" id="IPR035647">
    <property type="entry name" value="EFG_III/V"/>
</dbReference>
<dbReference type="InterPro" id="IPR047872">
    <property type="entry name" value="EFG_IV"/>
</dbReference>
<dbReference type="InterPro" id="IPR035649">
    <property type="entry name" value="EFG_V"/>
</dbReference>
<dbReference type="InterPro" id="IPR000640">
    <property type="entry name" value="EFG_V-like"/>
</dbReference>
<dbReference type="InterPro" id="IPR004161">
    <property type="entry name" value="EFTu-like_2"/>
</dbReference>
<dbReference type="InterPro" id="IPR031157">
    <property type="entry name" value="G_TR_CS"/>
</dbReference>
<dbReference type="InterPro" id="IPR027417">
    <property type="entry name" value="P-loop_NTPase"/>
</dbReference>
<dbReference type="InterPro" id="IPR020568">
    <property type="entry name" value="Ribosomal_Su5_D2-typ_SF"/>
</dbReference>
<dbReference type="InterPro" id="IPR014721">
    <property type="entry name" value="Ribsml_uS5_D2-typ_fold_subgr"/>
</dbReference>
<dbReference type="InterPro" id="IPR005225">
    <property type="entry name" value="Small_GTP-bd"/>
</dbReference>
<dbReference type="InterPro" id="IPR000795">
    <property type="entry name" value="T_Tr_GTP-bd_dom"/>
</dbReference>
<dbReference type="InterPro" id="IPR009000">
    <property type="entry name" value="Transl_B-barrel_sf"/>
</dbReference>
<dbReference type="InterPro" id="IPR004540">
    <property type="entry name" value="Transl_elong_EFG/EF2"/>
</dbReference>
<dbReference type="InterPro" id="IPR005517">
    <property type="entry name" value="Transl_elong_EFG/EF2_IV"/>
</dbReference>
<dbReference type="NCBIfam" id="TIGR00484">
    <property type="entry name" value="EF-G"/>
    <property type="match status" value="1"/>
</dbReference>
<dbReference type="NCBIfam" id="NF009379">
    <property type="entry name" value="PRK12740.1-3"/>
    <property type="match status" value="1"/>
</dbReference>
<dbReference type="NCBIfam" id="NF009381">
    <property type="entry name" value="PRK12740.1-5"/>
    <property type="match status" value="1"/>
</dbReference>
<dbReference type="NCBIfam" id="NF009891">
    <property type="entry name" value="PRK13351.1-1"/>
    <property type="match status" value="1"/>
</dbReference>
<dbReference type="NCBIfam" id="TIGR00231">
    <property type="entry name" value="small_GTP"/>
    <property type="match status" value="1"/>
</dbReference>
<dbReference type="PANTHER" id="PTHR43261:SF1">
    <property type="entry name" value="RIBOSOME-RELEASING FACTOR 2, MITOCHONDRIAL"/>
    <property type="match status" value="1"/>
</dbReference>
<dbReference type="PANTHER" id="PTHR43261">
    <property type="entry name" value="TRANSLATION ELONGATION FACTOR G-RELATED"/>
    <property type="match status" value="1"/>
</dbReference>
<dbReference type="Pfam" id="PF00679">
    <property type="entry name" value="EFG_C"/>
    <property type="match status" value="1"/>
</dbReference>
<dbReference type="Pfam" id="PF14492">
    <property type="entry name" value="EFG_III"/>
    <property type="match status" value="1"/>
</dbReference>
<dbReference type="Pfam" id="PF03764">
    <property type="entry name" value="EFG_IV"/>
    <property type="match status" value="1"/>
</dbReference>
<dbReference type="Pfam" id="PF00009">
    <property type="entry name" value="GTP_EFTU"/>
    <property type="match status" value="1"/>
</dbReference>
<dbReference type="Pfam" id="PF03144">
    <property type="entry name" value="GTP_EFTU_D2"/>
    <property type="match status" value="1"/>
</dbReference>
<dbReference type="PRINTS" id="PR00315">
    <property type="entry name" value="ELONGATNFCT"/>
</dbReference>
<dbReference type="SMART" id="SM00838">
    <property type="entry name" value="EFG_C"/>
    <property type="match status" value="1"/>
</dbReference>
<dbReference type="SMART" id="SM00889">
    <property type="entry name" value="EFG_IV"/>
    <property type="match status" value="1"/>
</dbReference>
<dbReference type="SUPFAM" id="SSF54980">
    <property type="entry name" value="EF-G C-terminal domain-like"/>
    <property type="match status" value="2"/>
</dbReference>
<dbReference type="SUPFAM" id="SSF52540">
    <property type="entry name" value="P-loop containing nucleoside triphosphate hydrolases"/>
    <property type="match status" value="1"/>
</dbReference>
<dbReference type="SUPFAM" id="SSF54211">
    <property type="entry name" value="Ribosomal protein S5 domain 2-like"/>
    <property type="match status" value="1"/>
</dbReference>
<dbReference type="SUPFAM" id="SSF50447">
    <property type="entry name" value="Translation proteins"/>
    <property type="match status" value="1"/>
</dbReference>
<dbReference type="PROSITE" id="PS00301">
    <property type="entry name" value="G_TR_1"/>
    <property type="match status" value="1"/>
</dbReference>
<dbReference type="PROSITE" id="PS51722">
    <property type="entry name" value="G_TR_2"/>
    <property type="match status" value="1"/>
</dbReference>
<reference key="1">
    <citation type="journal article" date="2009" name="Appl. Environ. Microbiol.">
        <title>Three genomes from the phylum Acidobacteria provide insight into the lifestyles of these microorganisms in soils.</title>
        <authorList>
            <person name="Ward N.L."/>
            <person name="Challacombe J.F."/>
            <person name="Janssen P.H."/>
            <person name="Henrissat B."/>
            <person name="Coutinho P.M."/>
            <person name="Wu M."/>
            <person name="Xie G."/>
            <person name="Haft D.H."/>
            <person name="Sait M."/>
            <person name="Badger J."/>
            <person name="Barabote R.D."/>
            <person name="Bradley B."/>
            <person name="Brettin T.S."/>
            <person name="Brinkac L.M."/>
            <person name="Bruce D."/>
            <person name="Creasy T."/>
            <person name="Daugherty S.C."/>
            <person name="Davidsen T.M."/>
            <person name="DeBoy R.T."/>
            <person name="Detter J.C."/>
            <person name="Dodson R.J."/>
            <person name="Durkin A.S."/>
            <person name="Ganapathy A."/>
            <person name="Gwinn-Giglio M."/>
            <person name="Han C.S."/>
            <person name="Khouri H."/>
            <person name="Kiss H."/>
            <person name="Kothari S.P."/>
            <person name="Madupu R."/>
            <person name="Nelson K.E."/>
            <person name="Nelson W.C."/>
            <person name="Paulsen I."/>
            <person name="Penn K."/>
            <person name="Ren Q."/>
            <person name="Rosovitz M.J."/>
            <person name="Selengut J.D."/>
            <person name="Shrivastava S."/>
            <person name="Sullivan S.A."/>
            <person name="Tapia R."/>
            <person name="Thompson L.S."/>
            <person name="Watkins K.L."/>
            <person name="Yang Q."/>
            <person name="Yu C."/>
            <person name="Zafar N."/>
            <person name="Zhou L."/>
            <person name="Kuske C.R."/>
        </authorList>
    </citation>
    <scope>NUCLEOTIDE SEQUENCE [LARGE SCALE GENOMIC DNA]</scope>
    <source>
        <strain>Ellin345</strain>
    </source>
</reference>
<protein>
    <recommendedName>
        <fullName evidence="1">Elongation factor G</fullName>
        <shortName evidence="1">EF-G</shortName>
    </recommendedName>
</protein>
<feature type="chain" id="PRO_0000263419" description="Elongation factor G">
    <location>
        <begin position="1"/>
        <end position="697"/>
    </location>
</feature>
<feature type="domain" description="tr-type G">
    <location>
        <begin position="8"/>
        <end position="283"/>
    </location>
</feature>
<feature type="binding site" evidence="1">
    <location>
        <begin position="17"/>
        <end position="24"/>
    </location>
    <ligand>
        <name>GTP</name>
        <dbReference type="ChEBI" id="CHEBI:37565"/>
    </ligand>
</feature>
<feature type="binding site" evidence="1">
    <location>
        <begin position="81"/>
        <end position="85"/>
    </location>
    <ligand>
        <name>GTP</name>
        <dbReference type="ChEBI" id="CHEBI:37565"/>
    </ligand>
</feature>
<feature type="binding site" evidence="1">
    <location>
        <begin position="135"/>
        <end position="138"/>
    </location>
    <ligand>
        <name>GTP</name>
        <dbReference type="ChEBI" id="CHEBI:37565"/>
    </ligand>
</feature>
<comment type="function">
    <text evidence="1">Catalyzes the GTP-dependent ribosomal translocation step during translation elongation. During this step, the ribosome changes from the pre-translocational (PRE) to the post-translocational (POST) state as the newly formed A-site-bound peptidyl-tRNA and P-site-bound deacylated tRNA move to the P and E sites, respectively. Catalyzes the coordinated movement of the two tRNA molecules, the mRNA and conformational changes in the ribosome.</text>
</comment>
<comment type="subcellular location">
    <subcellularLocation>
        <location evidence="1">Cytoplasm</location>
    </subcellularLocation>
</comment>
<comment type="similarity">
    <text evidence="1">Belongs to the TRAFAC class translation factor GTPase superfamily. Classic translation factor GTPase family. EF-G/EF-2 subfamily.</text>
</comment>
<proteinExistence type="inferred from homology"/>
<keyword id="KW-0963">Cytoplasm</keyword>
<keyword id="KW-0251">Elongation factor</keyword>
<keyword id="KW-0342">GTP-binding</keyword>
<keyword id="KW-0547">Nucleotide-binding</keyword>
<keyword id="KW-0648">Protein biosynthesis</keyword>
<keyword id="KW-1185">Reference proteome</keyword>
<evidence type="ECO:0000255" key="1">
    <source>
        <dbReference type="HAMAP-Rule" id="MF_00054"/>
    </source>
</evidence>
<organism>
    <name type="scientific">Koribacter versatilis (strain Ellin345)</name>
    <dbReference type="NCBI Taxonomy" id="204669"/>
    <lineage>
        <taxon>Bacteria</taxon>
        <taxon>Pseudomonadati</taxon>
        <taxon>Acidobacteriota</taxon>
        <taxon>Terriglobia</taxon>
        <taxon>Terriglobales</taxon>
        <taxon>Candidatus Korobacteraceae</taxon>
        <taxon>Candidatus Korobacter</taxon>
    </lineage>
</organism>
<accession>Q1ISC5</accession>